<gene>
    <name type="primary">cssC</name>
</gene>
<sequence length="232" mass="26832">MKSKLIILLMLVPFSSFSTENNFEINKTRVIYSDSTPSVQISNNKAYPLIVQSNIWDENNNKNHDFIATPPIFKMESESRNIIKIIKTNIKLPDSQESMRWLCIESMPPTEKSTKINRKEGRTDSINISIRGCIKLIYQPASVPSPVFNNIVEKLKWHKNGKYLVLKNNTPYYISFSEVFFDSDKVNNAKDILYVKPYSEKKIDISNRIIKKIKWAMIDDAGAKTKLYESIL</sequence>
<protein>
    <recommendedName>
        <fullName>Chaperone protein CssC</fullName>
    </recommendedName>
</protein>
<comment type="function">
    <text>Involved in the biogenesis of the CS6 fimbria.</text>
</comment>
<comment type="subcellular location">
    <subcellularLocation>
        <location evidence="2">Periplasm</location>
    </subcellularLocation>
</comment>
<comment type="similarity">
    <text evidence="2">Belongs to the periplasmic pilus chaperone family.</text>
</comment>
<reference key="1">
    <citation type="submission" date="1994-01" db="EMBL/GenBank/DDBJ databases">
        <authorList>
            <person name="Wolf M.K."/>
            <person name="de Haan L."/>
            <person name="Cassels F.C."/>
            <person name="Willshaw G.A."/>
            <person name="van Gestel E."/>
            <person name="Gaastra W."/>
            <person name="Warren R."/>
            <person name="Boedeker E.C."/>
        </authorList>
    </citation>
    <scope>NUCLEOTIDE SEQUENCE [GENOMIC DNA]</scope>
    <source>
        <strain>O167:H5 / E10703 / EIEC</strain>
    </source>
</reference>
<proteinExistence type="inferred from homology"/>
<evidence type="ECO:0000255" key="1"/>
<evidence type="ECO:0000305" key="2"/>
<accession>P53518</accession>
<name>CSSC1_ECOLX</name>
<keyword id="KW-0143">Chaperone</keyword>
<keyword id="KW-1029">Fimbrium biogenesis</keyword>
<keyword id="KW-0393">Immunoglobulin domain</keyword>
<keyword id="KW-0574">Periplasm</keyword>
<keyword id="KW-0732">Signal</keyword>
<dbReference type="EMBL" id="U04844">
    <property type="protein sequence ID" value="AAC45095.1"/>
    <property type="molecule type" value="Unassigned_DNA"/>
</dbReference>
<dbReference type="PIR" id="I83349">
    <property type="entry name" value="I83349"/>
</dbReference>
<dbReference type="SMR" id="P53518"/>
<dbReference type="GO" id="GO:0030288">
    <property type="term" value="C:outer membrane-bounded periplasmic space"/>
    <property type="evidence" value="ECO:0007669"/>
    <property type="project" value="InterPro"/>
</dbReference>
<dbReference type="GO" id="GO:0071555">
    <property type="term" value="P:cell wall organization"/>
    <property type="evidence" value="ECO:0007669"/>
    <property type="project" value="InterPro"/>
</dbReference>
<dbReference type="GO" id="GO:0061077">
    <property type="term" value="P:chaperone-mediated protein folding"/>
    <property type="evidence" value="ECO:0007669"/>
    <property type="project" value="InterPro"/>
</dbReference>
<dbReference type="Gene3D" id="2.60.40.10">
    <property type="entry name" value="Immunoglobulins"/>
    <property type="match status" value="2"/>
</dbReference>
<dbReference type="InterPro" id="IPR013783">
    <property type="entry name" value="Ig-like_fold"/>
</dbReference>
<dbReference type="InterPro" id="IPR008962">
    <property type="entry name" value="PapD-like_sf"/>
</dbReference>
<dbReference type="InterPro" id="IPR050643">
    <property type="entry name" value="Periplasmic_pilus_chap"/>
</dbReference>
<dbReference type="InterPro" id="IPR036316">
    <property type="entry name" value="Pili_assmbl_chap_C_dom_sf"/>
</dbReference>
<dbReference type="InterPro" id="IPR001829">
    <property type="entry name" value="Pili_assmbl_chaperone_bac"/>
</dbReference>
<dbReference type="InterPro" id="IPR016148">
    <property type="entry name" value="Pili_assmbl_chaperone_C"/>
</dbReference>
<dbReference type="InterPro" id="IPR018046">
    <property type="entry name" value="Pili_assmbl_chaperone_CS"/>
</dbReference>
<dbReference type="InterPro" id="IPR016147">
    <property type="entry name" value="Pili_assmbl_chaperone_N"/>
</dbReference>
<dbReference type="PANTHER" id="PTHR30251:SF9">
    <property type="entry name" value="CHAPERONE PROTEIN CAF1M"/>
    <property type="match status" value="1"/>
</dbReference>
<dbReference type="PANTHER" id="PTHR30251">
    <property type="entry name" value="PILUS ASSEMBLY CHAPERONE"/>
    <property type="match status" value="1"/>
</dbReference>
<dbReference type="Pfam" id="PF02753">
    <property type="entry name" value="PapD_C"/>
    <property type="match status" value="1"/>
</dbReference>
<dbReference type="Pfam" id="PF00345">
    <property type="entry name" value="PapD_N"/>
    <property type="match status" value="1"/>
</dbReference>
<dbReference type="PRINTS" id="PR00969">
    <property type="entry name" value="CHAPERONPILI"/>
</dbReference>
<dbReference type="SUPFAM" id="SSF49354">
    <property type="entry name" value="PapD-like"/>
    <property type="match status" value="1"/>
</dbReference>
<dbReference type="SUPFAM" id="SSF49584">
    <property type="entry name" value="Periplasmic chaperone C-domain"/>
    <property type="match status" value="1"/>
</dbReference>
<dbReference type="PROSITE" id="PS00635">
    <property type="entry name" value="PILI_CHAPERONE"/>
    <property type="match status" value="1"/>
</dbReference>
<feature type="signal peptide" evidence="1">
    <location>
        <begin position="1"/>
        <end position="20"/>
    </location>
</feature>
<feature type="chain" id="PRO_0000009267" description="Chaperone protein CssC">
    <location>
        <begin position="21"/>
        <end position="232"/>
    </location>
</feature>
<organism>
    <name type="scientific">Escherichia coli</name>
    <dbReference type="NCBI Taxonomy" id="562"/>
    <lineage>
        <taxon>Bacteria</taxon>
        <taxon>Pseudomonadati</taxon>
        <taxon>Pseudomonadota</taxon>
        <taxon>Gammaproteobacteria</taxon>
        <taxon>Enterobacterales</taxon>
        <taxon>Enterobacteriaceae</taxon>
        <taxon>Escherichia</taxon>
    </lineage>
</organism>